<proteinExistence type="inferred from homology"/>
<comment type="function">
    <text evidence="1">May have oxidoreductase activity.</text>
</comment>
<comment type="subunit">
    <text evidence="2">Binds to mononucleosomes. Interacts with male-specific lethal (MSL) histone acetyltransferase complex at least composed of mof, msl-1, msl-2 and msl-3.</text>
</comment>
<comment type="subcellular location">
    <subcellularLocation>
        <location evidence="2">Chromosome</location>
    </subcellularLocation>
    <text evidence="2">Localization to open chromatin depends on H3K36 trimethylation by Set2.</text>
</comment>
<comment type="domain">
    <text evidence="1">The PWWP domain is a H3 reader and strongly binds DNA.</text>
</comment>
<comment type="domain">
    <text evidence="1">In the dehydrogenase domain, the conserved NAD(P)H-binding sites and sequence similarity to plant dehydrogenases suggest that this protein may have oxidoreductase activity. However, since the active site is not conserved, the dehydrogenase domain seems to serve as a catalytically inert oligomerization module.</text>
</comment>
<comment type="similarity">
    <text evidence="5">Belongs to the HIBADH-related family. NP60 subfamily.</text>
</comment>
<comment type="sequence caution" evidence="5">
    <conflict type="erroneous gene model prediction">
        <sequence resource="EMBL-CDS" id="EAA14020"/>
    </conflict>
</comment>
<feature type="chain" id="PRO_0000312129" description="Cytokine-like nuclear factor N-PAC">
    <location>
        <begin position="1"/>
        <end position="566"/>
    </location>
</feature>
<feature type="domain" description="PWWP" evidence="3">
    <location>
        <begin position="9"/>
        <end position="70"/>
    </location>
</feature>
<feature type="region of interest" description="Disordered" evidence="4">
    <location>
        <begin position="127"/>
        <end position="147"/>
    </location>
</feature>
<feature type="region of interest" description="Disordered" evidence="4">
    <location>
        <begin position="206"/>
        <end position="234"/>
    </location>
</feature>
<feature type="region of interest" description="Dehydrogenase domain" evidence="1">
    <location>
        <begin position="274"/>
        <end position="566"/>
    </location>
</feature>
<feature type="binding site" evidence="1">
    <location>
        <begin position="284"/>
        <end position="298"/>
    </location>
    <ligand>
        <name>NAD(+)</name>
        <dbReference type="ChEBI" id="CHEBI:57540"/>
    </ligand>
</feature>
<feature type="binding site" evidence="1">
    <location>
        <position position="518"/>
    </location>
    <ligand>
        <name>NAD(+)</name>
        <dbReference type="ChEBI" id="CHEBI:57540"/>
    </ligand>
</feature>
<reference key="1">
    <citation type="journal article" date="2002" name="Science">
        <title>The genome sequence of the malaria mosquito Anopheles gambiae.</title>
        <authorList>
            <person name="Holt R.A."/>
            <person name="Subramanian G.M."/>
            <person name="Halpern A."/>
            <person name="Sutton G.G."/>
            <person name="Charlab R."/>
            <person name="Nusskern D.R."/>
            <person name="Wincker P."/>
            <person name="Clark A.G."/>
            <person name="Ribeiro J.M.C."/>
            <person name="Wides R."/>
            <person name="Salzberg S.L."/>
            <person name="Loftus B.J."/>
            <person name="Yandell M.D."/>
            <person name="Majoros W.H."/>
            <person name="Rusch D.B."/>
            <person name="Lai Z."/>
            <person name="Kraft C.L."/>
            <person name="Abril J.F."/>
            <person name="Anthouard V."/>
            <person name="Arensburger P."/>
            <person name="Atkinson P.W."/>
            <person name="Baden H."/>
            <person name="de Berardinis V."/>
            <person name="Baldwin D."/>
            <person name="Benes V."/>
            <person name="Biedler J."/>
            <person name="Blass C."/>
            <person name="Bolanos R."/>
            <person name="Boscus D."/>
            <person name="Barnstead M."/>
            <person name="Cai S."/>
            <person name="Center A."/>
            <person name="Chaturverdi K."/>
            <person name="Christophides G.K."/>
            <person name="Chrystal M.A.M."/>
            <person name="Clamp M."/>
            <person name="Cravchik A."/>
            <person name="Curwen V."/>
            <person name="Dana A."/>
            <person name="Delcher A."/>
            <person name="Dew I."/>
            <person name="Evans C.A."/>
            <person name="Flanigan M."/>
            <person name="Grundschober-Freimoser A."/>
            <person name="Friedli L."/>
            <person name="Gu Z."/>
            <person name="Guan P."/>
            <person name="Guigo R."/>
            <person name="Hillenmeyer M.E."/>
            <person name="Hladun S.L."/>
            <person name="Hogan J.R."/>
            <person name="Hong Y.S."/>
            <person name="Hoover J."/>
            <person name="Jaillon O."/>
            <person name="Ke Z."/>
            <person name="Kodira C.D."/>
            <person name="Kokoza E."/>
            <person name="Koutsos A."/>
            <person name="Letunic I."/>
            <person name="Levitsky A.A."/>
            <person name="Liang Y."/>
            <person name="Lin J.-J."/>
            <person name="Lobo N.F."/>
            <person name="Lopez J.R."/>
            <person name="Malek J.A."/>
            <person name="McIntosh T.C."/>
            <person name="Meister S."/>
            <person name="Miller J.R."/>
            <person name="Mobarry C."/>
            <person name="Mongin E."/>
            <person name="Murphy S.D."/>
            <person name="O'Brochta D.A."/>
            <person name="Pfannkoch C."/>
            <person name="Qi R."/>
            <person name="Regier M.A."/>
            <person name="Remington K."/>
            <person name="Shao H."/>
            <person name="Sharakhova M.V."/>
            <person name="Sitter C.D."/>
            <person name="Shetty J."/>
            <person name="Smith T.J."/>
            <person name="Strong R."/>
            <person name="Sun J."/>
            <person name="Thomasova D."/>
            <person name="Ton L.Q."/>
            <person name="Topalis P."/>
            <person name="Tu Z.J."/>
            <person name="Unger M.F."/>
            <person name="Walenz B."/>
            <person name="Wang A.H."/>
            <person name="Wang J."/>
            <person name="Wang M."/>
            <person name="Wang X."/>
            <person name="Woodford K.J."/>
            <person name="Wortman J.R."/>
            <person name="Wu M."/>
            <person name="Yao A."/>
            <person name="Zdobnov E.M."/>
            <person name="Zhang H."/>
            <person name="Zhao Q."/>
            <person name="Zhao S."/>
            <person name="Zhu S.C."/>
            <person name="Zhimulev I."/>
            <person name="Coluzzi M."/>
            <person name="della Torre A."/>
            <person name="Roth C.W."/>
            <person name="Louis C."/>
            <person name="Kalush F."/>
            <person name="Mural R.J."/>
            <person name="Myers E.W."/>
            <person name="Adams M.D."/>
            <person name="Smith H.O."/>
            <person name="Broder S."/>
            <person name="Gardner M.J."/>
            <person name="Fraser C.M."/>
            <person name="Birney E."/>
            <person name="Bork P."/>
            <person name="Brey P.T."/>
            <person name="Venter J.C."/>
            <person name="Weissenbach J."/>
            <person name="Kafatos F.C."/>
            <person name="Collins F.H."/>
            <person name="Hoffman S.L."/>
        </authorList>
    </citation>
    <scope>NUCLEOTIDE SEQUENCE [LARGE SCALE GENOMIC DNA]</scope>
    <source>
        <strain>PEST</strain>
    </source>
</reference>
<protein>
    <recommendedName>
        <fullName>Cytokine-like nuclear factor N-PAC</fullName>
        <shortName>NPAC</shortName>
    </recommendedName>
    <alternativeName>
        <fullName>Glyoxylate reductase 1 homolog</fullName>
    </alternativeName>
    <alternativeName>
        <fullName>Nuclear protein NP60 homolog</fullName>
    </alternativeName>
    <alternativeName>
        <fullName>Putative oxidoreductase GLYR1 homolog</fullName>
    </alternativeName>
</protein>
<dbReference type="EMBL" id="AAAB01008980">
    <property type="protein sequence ID" value="EAA14020.4"/>
    <property type="status" value="ALT_SEQ"/>
    <property type="molecule type" value="Genomic_DNA"/>
</dbReference>
<dbReference type="RefSeq" id="XP_319082.4">
    <property type="nucleotide sequence ID" value="XM_319082.4"/>
</dbReference>
<dbReference type="SMR" id="Q7Q161"/>
<dbReference type="FunCoup" id="Q7Q161">
    <property type="interactions" value="2383"/>
</dbReference>
<dbReference type="STRING" id="7165.Q7Q161"/>
<dbReference type="PaxDb" id="7165-AGAP009949-PA"/>
<dbReference type="VEuPathDB" id="VectorBase:AGAMI1_004192"/>
<dbReference type="VEuPathDB" id="VectorBase:AGAP009949"/>
<dbReference type="eggNOG" id="KOG0409">
    <property type="taxonomic scope" value="Eukaryota"/>
</dbReference>
<dbReference type="HOGENOM" id="CLU_018075_0_0_1"/>
<dbReference type="InParanoid" id="Q7Q161"/>
<dbReference type="OrthoDB" id="6493824at2759"/>
<dbReference type="Proteomes" id="UP000007062">
    <property type="component" value="Chromosome 3R"/>
</dbReference>
<dbReference type="GO" id="GO:0000785">
    <property type="term" value="C:chromatin"/>
    <property type="evidence" value="ECO:0000318"/>
    <property type="project" value="GO_Central"/>
</dbReference>
<dbReference type="GO" id="GO:0003677">
    <property type="term" value="F:DNA binding"/>
    <property type="evidence" value="ECO:0000318"/>
    <property type="project" value="GO_Central"/>
</dbReference>
<dbReference type="GO" id="GO:0051287">
    <property type="term" value="F:NAD binding"/>
    <property type="evidence" value="ECO:0007669"/>
    <property type="project" value="InterPro"/>
</dbReference>
<dbReference type="GO" id="GO:0050661">
    <property type="term" value="F:NADP binding"/>
    <property type="evidence" value="ECO:0007669"/>
    <property type="project" value="InterPro"/>
</dbReference>
<dbReference type="GO" id="GO:0031491">
    <property type="term" value="F:nucleosome binding"/>
    <property type="evidence" value="ECO:0000318"/>
    <property type="project" value="GO_Central"/>
</dbReference>
<dbReference type="GO" id="GO:0140673">
    <property type="term" value="P:transcription elongation-coupled chromatin remodeling"/>
    <property type="evidence" value="ECO:0000318"/>
    <property type="project" value="GO_Central"/>
</dbReference>
<dbReference type="CDD" id="cd05836">
    <property type="entry name" value="PWWP_GLYR1"/>
    <property type="match status" value="1"/>
</dbReference>
<dbReference type="FunFam" id="3.40.50.720:FF:000058">
    <property type="entry name" value="Putative oxidoreductase GLYR1 homolog"/>
    <property type="match status" value="1"/>
</dbReference>
<dbReference type="Gene3D" id="2.30.30.140">
    <property type="match status" value="1"/>
</dbReference>
<dbReference type="Gene3D" id="1.10.1040.10">
    <property type="entry name" value="N-(1-d-carboxylethyl)-l-norvaline Dehydrogenase, domain 2"/>
    <property type="match status" value="1"/>
</dbReference>
<dbReference type="Gene3D" id="3.40.50.720">
    <property type="entry name" value="NAD(P)-binding Rossmann-like Domain"/>
    <property type="match status" value="1"/>
</dbReference>
<dbReference type="InterPro" id="IPR008927">
    <property type="entry name" value="6-PGluconate_DH-like_C_sf"/>
</dbReference>
<dbReference type="InterPro" id="IPR013328">
    <property type="entry name" value="6PGD_dom2"/>
</dbReference>
<dbReference type="InterPro" id="IPR006115">
    <property type="entry name" value="6PGDH_NADP-bd"/>
</dbReference>
<dbReference type="InterPro" id="IPR035501">
    <property type="entry name" value="GLYR1_PWWP"/>
</dbReference>
<dbReference type="InterPro" id="IPR029154">
    <property type="entry name" value="HIBADH-like_NADP-bd"/>
</dbReference>
<dbReference type="InterPro" id="IPR051265">
    <property type="entry name" value="HIBADH-related_NP60_sf"/>
</dbReference>
<dbReference type="InterPro" id="IPR036291">
    <property type="entry name" value="NAD(P)-bd_dom_sf"/>
</dbReference>
<dbReference type="InterPro" id="IPR000313">
    <property type="entry name" value="PWWP_dom"/>
</dbReference>
<dbReference type="PANTHER" id="PTHR43580:SF2">
    <property type="entry name" value="CYTOKINE-LIKE NUCLEAR FACTOR N-PAC"/>
    <property type="match status" value="1"/>
</dbReference>
<dbReference type="PANTHER" id="PTHR43580">
    <property type="entry name" value="OXIDOREDUCTASE GLYR1-RELATED"/>
    <property type="match status" value="1"/>
</dbReference>
<dbReference type="Pfam" id="PF14833">
    <property type="entry name" value="NAD_binding_11"/>
    <property type="match status" value="1"/>
</dbReference>
<dbReference type="Pfam" id="PF03446">
    <property type="entry name" value="NAD_binding_2"/>
    <property type="match status" value="1"/>
</dbReference>
<dbReference type="Pfam" id="PF00855">
    <property type="entry name" value="PWWP"/>
    <property type="match status" value="1"/>
</dbReference>
<dbReference type="SMART" id="SM00293">
    <property type="entry name" value="PWWP"/>
    <property type="match status" value="1"/>
</dbReference>
<dbReference type="SUPFAM" id="SSF48179">
    <property type="entry name" value="6-phosphogluconate dehydrogenase C-terminal domain-like"/>
    <property type="match status" value="1"/>
</dbReference>
<dbReference type="SUPFAM" id="SSF51735">
    <property type="entry name" value="NAD(P)-binding Rossmann-fold domains"/>
    <property type="match status" value="1"/>
</dbReference>
<dbReference type="SUPFAM" id="SSF63748">
    <property type="entry name" value="Tudor/PWWP/MBT"/>
    <property type="match status" value="1"/>
</dbReference>
<dbReference type="PROSITE" id="PS50812">
    <property type="entry name" value="PWWP"/>
    <property type="match status" value="1"/>
</dbReference>
<gene>
    <name type="ORF">AGAP009949</name>
</gene>
<name>GLYR1_ANOGA</name>
<evidence type="ECO:0000250" key="1">
    <source>
        <dbReference type="UniProtKB" id="Q49A26"/>
    </source>
</evidence>
<evidence type="ECO:0000250" key="2">
    <source>
        <dbReference type="UniProtKB" id="Q8T079"/>
    </source>
</evidence>
<evidence type="ECO:0000255" key="3">
    <source>
        <dbReference type="PROSITE-ProRule" id="PRU00162"/>
    </source>
</evidence>
<evidence type="ECO:0000256" key="4">
    <source>
        <dbReference type="SAM" id="MobiDB-lite"/>
    </source>
</evidence>
<evidence type="ECO:0000305" key="5"/>
<keyword id="KW-0158">Chromosome</keyword>
<keyword id="KW-1185">Reference proteome</keyword>
<sequence>MSDSTGYAVNDLVWAKMKGFSPWPGRISVPPAELRKIAVKKNNPVKCIFFFGSNNYAWIEETQIKPYLQFKDTHLNSSKSAQFKEALKQIEEFRVNPEKFQPLFVGENEAANRPDPDEEFNRLREGVASGTEESGAEDGASVNNTTTPAVLESVDEATSTPMVKKSAKKKVRASLPIKLNVDKVVCESIITFQCSPRSVGNKAKAMLDDGVSGAPSPKRKKKLLNDSGELSSLDASPVRRNAPVTHLLNRPVTVTRPETPEIDMSSVSNAVQSRNIKASQLKFGFLGLGVMGCGIVKNLIKSGHSVVVWNRSAHKCRKFQEVGAEVADTPSDVVEMTDVTYSCVSDPQVAKDMVFGNCGVMSANLAGKGYVEMTGVDPETSNDINEAIISKGGRYLEAQIQGSKNQAEEGTLIILASGDRLLFEECQSCFEAISRNSFYLGDVGNATKMNLILQMISGITLAGVAEAMALADRAGLQQKDVLEVLELTNMSSEMMLQKGNAIIKGEFPTHHALKHMQKDLKLALSLADGLEQSLPITAASNEVYKHAKRLGYGSHDASAVYVRARF</sequence>
<organism>
    <name type="scientific">Anopheles gambiae</name>
    <name type="common">African malaria mosquito</name>
    <dbReference type="NCBI Taxonomy" id="7165"/>
    <lineage>
        <taxon>Eukaryota</taxon>
        <taxon>Metazoa</taxon>
        <taxon>Ecdysozoa</taxon>
        <taxon>Arthropoda</taxon>
        <taxon>Hexapoda</taxon>
        <taxon>Insecta</taxon>
        <taxon>Pterygota</taxon>
        <taxon>Neoptera</taxon>
        <taxon>Endopterygota</taxon>
        <taxon>Diptera</taxon>
        <taxon>Nematocera</taxon>
        <taxon>Culicoidea</taxon>
        <taxon>Culicidae</taxon>
        <taxon>Anophelinae</taxon>
        <taxon>Anopheles</taxon>
    </lineage>
</organism>
<accession>Q7Q161</accession>